<accession>B0G170</accession>
<sequence>MEKYDIYYNSNEEYYGDVAVIGIGLRFPSGDLNESISKPNQLFNSLLNGLNGIVTTSERWSDNYYLNGEINSVSAGLLPLDEWKRFDPIFFGINPSYDNVVTIDPQQRLLLKCVWEALEDSGIDPISLRGTNTSTFIGSSTTDYGSLQKSPFETQNNIFGSSNHSVANRIGYNFDFRGENFTIDSACSSSLNAINCGYNSIKSNKSNVSVVGGVNFILDPHVSKSFTQLNMLSPTGKCHSFSSDADGFVRSEGVGIVILKKLKDAIKDSNNIYCVIKGSSSNVDGNYDKLNFYSPSKSSQYENMKLAIKSTNGQINESDIDYCEAHGTGTPTGDPIELEGISRLFDQNNNNKKQVLVGSIKSNIGHTEACSGVASLIKCCIMFKNKLFLQNINFKESNPLINFKEWALKVVTEPITFNENKTTVMLINNFGVTGSNVCLILSEFKDKRYSNDESSSDNFCEQIDIDSKANEKKKFLIPLSSNSSTSLDNYKSIIVNNNDDDSNSSTRSFQEFVYNQIKFKSTSLIQKSVIIASDWNEFQDDDNQIKLKNSESLISNITVEKKKSPLTVIVFCGQGSQYNRMALSLYENEPIFRESVNRFDKELFKYYGYSVLDRLRSVSDKDEISIHLPILAQPANIMIQISLYELYKHWGVSADIIVGHSLGELSSSYSSGMIDFETLCHLIYHRSLAQNKTTGTGRALSVNISYDEFIERYQSKNNKYETLEIACYNSPTSIVIAGKEDLLNEISKEFKSNDIFCAMLGSLSSFHTSSQLMIKDEVCSLVFKSKLPSVPVFSTVTTNLFNDQTPYNANYVWENIRQPVSFTQTISNLYKHIESNDMGNEITFIEVAPHPTLQFYLNQMKSTQSSYFNNGKSVTIYSPLHKKKNDYNEFLKTISLLYVNNNFNINFKSQLTNINNNNNNINNNNNNNNNNNNNNNNNNNNNNNNNKIIQFNINSLPLYQWDDNEYFKLNPFHEKITNEGPSIQNLGNGIDSACPTYQTFIDIKKPPFQWLKGHQVSDKFYYPGMGYVQNLLSIYPNQDITISSLEFKSPLVLTEGNNQCLETTVSLLSKNEFNVKSHYKDQKTNQWILSSLGNFSLFKHNSINSEKLINIQALKDKCNFTTISKHDFYESIKIKTNLTYKGLFQGVKECSIGNNCSLAVVSLNEINNHTISNHSTIGRSLFNAATLDSCLHGSLIAVAQPVVLDRIEGFKLYSSNIPLSSSLSKDDNDNSNNSLIKELYIFTEEKARTNYQSFSASVKIILPNGRLLMEISRVVCSSVSLANPSNTIICKPPSNEIYTPYLQPKDSIINKPQQFKHLYSVDEFIAKEEDNQIISTELLLSLFYKHINVRCPTINLESLTTLEYNQFKQLYYNNNGLVNENLFKFVFEILKSYSSSNHYILNHHNNSENKNKNNNNNNNSNNNENSNNESPIHFEKLYNLYTKTTKIIAKQIFPLKDDSFTDTPQSLFENGFLDDFYKNSRVVQPLNNLLSEIIIEALKPILNQPIVFRILEAGGGTGSLSLLILEKICKLLNANPNSVIDIEFTWSDVSSSFSAEIKEKFSPFTAHKNFNIIHRVLDLEKPLFDQDFKTSYYDLVVMSNVMHVVKKLKPTLDEIHNILTPNGQLLFVEPPYKSINYDSVFCCFSQWWPSSDSDTELRPDRSCMNQDKWIKILNETNYRDTIISGNDNLIFLIQTRKPSINEIISKQSSDSSLDQFNSFNNIILFGNNNYGCSLQNSISSNQELKSKTININNFNEFQTWIANNYDNSDDFDNNKTLIIFLKSIEPINISNFKEITYEYIQINQLILKLELTNNFKHLLISLDSTTDNYLSSSIIGAARYFVEYPQLDLYILNYDIISLKILNNNSSSSCNSSNGSISSCSCKQQQLSLINYLINTNNNIQKEFTINNNKVYYERYTRHSNKIKCNLQSKSFETNKDNLLIQLDSNLEYQLYSKRVEPNSKEVEIEIKATGINYKDYLMHIGMVSSDLDLKYGKEYEVENCIGIENPMIGNDFSGIITRLGSDAEKKKFKVGDHVCGVASKTSGSHVVIDYNFIYHQPLNYNHSISASIPSIYVTSLHSIYGVGNLKSNESILIHSAAGGIGISSLDLLKCKKHQGHIFLTVGSKDKEDYLKKNYGSFITAIYSSRNKDYVNEIKNKLIELGEVKQQGVDLILNTLSSEFMDSNFQCLNMSGRIVDLSVTHLTPNDYIANNHFKYNMGYNNVEMIDFNGKMVRSYLKKIIKMINSNKLELSIPIIEYSNNQFKDAIEYINQRKHIGKIIVNHNQDEFNRVYNNYQQNNNNNNQIIMKHSYDISKLNMGKNILLTGQTGIILEIMKYLIRYSNHSIQNIIILSKSKLKWELELLINQTKFIKDNIIKFHFIQIDIEDSNKVNQVLNQLELNENITNIDSIIHFAFNNDIGDVQDVNMNRLNIAHGAKTIGAINLHNESINRSWKIKQFIIASSVSSIFGSDQQCCYVSACSVIDSLSKYRHSLGLPSLAINLGTVASTGFISRNNAIETMFKSSFLKLFSPQLVISSLDLFIQNQRQYPNYSLVDFNFEVMLTSPNYHLYKLDYEINIFKKSYQINTNSSSGSGSDNEFIHSTILNKISELLSIDESKINEDLQLTQYGMDSLVIVQLKNFIDNQLGHNLITIHQLQHNKINQSIDIIKFGYLINKNKFKYKNNNKNNNNG</sequence>
<dbReference type="EC" id="2.3.1.-"/>
<dbReference type="EMBL" id="AAFI02000163">
    <property type="protein sequence ID" value="EDR41037.1"/>
    <property type="molecule type" value="Genomic_DNA"/>
</dbReference>
<dbReference type="RefSeq" id="XP_001733033.1">
    <property type="nucleotide sequence ID" value="XM_001732981.1"/>
</dbReference>
<dbReference type="SMR" id="B0G170"/>
<dbReference type="STRING" id="44689.B0G170"/>
<dbReference type="PaxDb" id="44689-DDB0235222"/>
<dbReference type="EnsemblProtists" id="EDR41037">
    <property type="protein sequence ID" value="EDR41037"/>
    <property type="gene ID" value="DDB_G0290469"/>
</dbReference>
<dbReference type="GeneID" id="8627661"/>
<dbReference type="KEGG" id="ddi:DDB_G0290469"/>
<dbReference type="dictyBase" id="DDB_G0290469">
    <property type="gene designation" value="pks28"/>
</dbReference>
<dbReference type="VEuPathDB" id="AmoebaDB:DDB_G0290469"/>
<dbReference type="eggNOG" id="KOG1202">
    <property type="taxonomic scope" value="Eukaryota"/>
</dbReference>
<dbReference type="HOGENOM" id="CLU_000022_31_5_1"/>
<dbReference type="InParanoid" id="B0G170"/>
<dbReference type="OMA" id="RNWIGAY"/>
<dbReference type="PhylomeDB" id="B0G170"/>
<dbReference type="PRO" id="PR:B0G170"/>
<dbReference type="Proteomes" id="UP000002195">
    <property type="component" value="Chromosome 5"/>
</dbReference>
<dbReference type="GO" id="GO:0004315">
    <property type="term" value="F:3-oxoacyl-[acyl-carrier-protein] synthase activity"/>
    <property type="evidence" value="ECO:0007669"/>
    <property type="project" value="InterPro"/>
</dbReference>
<dbReference type="GO" id="GO:0016491">
    <property type="term" value="F:oxidoreductase activity"/>
    <property type="evidence" value="ECO:0007669"/>
    <property type="project" value="InterPro"/>
</dbReference>
<dbReference type="GO" id="GO:0006633">
    <property type="term" value="P:fatty acid biosynthetic process"/>
    <property type="evidence" value="ECO:0000318"/>
    <property type="project" value="GO_Central"/>
</dbReference>
<dbReference type="CDD" id="cd02440">
    <property type="entry name" value="AdoMet_MTases"/>
    <property type="match status" value="1"/>
</dbReference>
<dbReference type="CDD" id="cd05195">
    <property type="entry name" value="enoyl_red"/>
    <property type="match status" value="1"/>
</dbReference>
<dbReference type="CDD" id="cd08954">
    <property type="entry name" value="KR_1_FAS_SDR_x"/>
    <property type="match status" value="1"/>
</dbReference>
<dbReference type="CDD" id="cd00833">
    <property type="entry name" value="PKS"/>
    <property type="match status" value="1"/>
</dbReference>
<dbReference type="FunFam" id="3.40.50.720:FF:000967">
    <property type="entry name" value="Probable polyketide synthase 30"/>
    <property type="match status" value="1"/>
</dbReference>
<dbReference type="FunFam" id="3.40.47.10:FF:000091">
    <property type="entry name" value="Probable polyketide synthase 32"/>
    <property type="match status" value="1"/>
</dbReference>
<dbReference type="FunFam" id="3.40.50.720:FF:000794">
    <property type="entry name" value="Probable polyketide synthase 33"/>
    <property type="match status" value="1"/>
</dbReference>
<dbReference type="Gene3D" id="3.40.47.10">
    <property type="match status" value="1"/>
</dbReference>
<dbReference type="Gene3D" id="1.10.1200.10">
    <property type="entry name" value="ACP-like"/>
    <property type="match status" value="1"/>
</dbReference>
<dbReference type="Gene3D" id="3.40.366.10">
    <property type="entry name" value="Malonyl-Coenzyme A Acyl Carrier Protein, domain 2"/>
    <property type="match status" value="1"/>
</dbReference>
<dbReference type="Gene3D" id="3.90.180.10">
    <property type="entry name" value="Medium-chain alcohol dehydrogenases, catalytic domain"/>
    <property type="match status" value="1"/>
</dbReference>
<dbReference type="Gene3D" id="3.40.50.720">
    <property type="entry name" value="NAD(P)-binding Rossmann-like Domain"/>
    <property type="match status" value="2"/>
</dbReference>
<dbReference type="Gene3D" id="3.10.129.110">
    <property type="entry name" value="Polyketide synthase dehydratase"/>
    <property type="match status" value="1"/>
</dbReference>
<dbReference type="Gene3D" id="3.40.50.150">
    <property type="entry name" value="Vaccinia Virus protein VP39"/>
    <property type="match status" value="1"/>
</dbReference>
<dbReference type="InterPro" id="IPR001227">
    <property type="entry name" value="Ac_transferase_dom_sf"/>
</dbReference>
<dbReference type="InterPro" id="IPR036736">
    <property type="entry name" value="ACP-like_sf"/>
</dbReference>
<dbReference type="InterPro" id="IPR014043">
    <property type="entry name" value="Acyl_transferase_dom"/>
</dbReference>
<dbReference type="InterPro" id="IPR016035">
    <property type="entry name" value="Acyl_Trfase/lysoPLipase"/>
</dbReference>
<dbReference type="InterPro" id="IPR013154">
    <property type="entry name" value="ADH-like_N"/>
</dbReference>
<dbReference type="InterPro" id="IPR011032">
    <property type="entry name" value="GroES-like_sf"/>
</dbReference>
<dbReference type="InterPro" id="IPR018201">
    <property type="entry name" value="Ketoacyl_synth_AS"/>
</dbReference>
<dbReference type="InterPro" id="IPR014031">
    <property type="entry name" value="Ketoacyl_synth_C"/>
</dbReference>
<dbReference type="InterPro" id="IPR014030">
    <property type="entry name" value="Ketoacyl_synth_N"/>
</dbReference>
<dbReference type="InterPro" id="IPR016036">
    <property type="entry name" value="Malonyl_transacylase_ACP-bd"/>
</dbReference>
<dbReference type="InterPro" id="IPR013217">
    <property type="entry name" value="Methyltransf_12"/>
</dbReference>
<dbReference type="InterPro" id="IPR036291">
    <property type="entry name" value="NAD(P)-bd_dom_sf"/>
</dbReference>
<dbReference type="InterPro" id="IPR020841">
    <property type="entry name" value="PKS_Beta-ketoAc_synthase_dom"/>
</dbReference>
<dbReference type="InterPro" id="IPR042104">
    <property type="entry name" value="PKS_dehydratase_sf"/>
</dbReference>
<dbReference type="InterPro" id="IPR020843">
    <property type="entry name" value="PKS_ER"/>
</dbReference>
<dbReference type="InterPro" id="IPR013968">
    <property type="entry name" value="PKS_KR"/>
</dbReference>
<dbReference type="InterPro" id="IPR049900">
    <property type="entry name" value="PKS_mFAS_DH"/>
</dbReference>
<dbReference type="InterPro" id="IPR050444">
    <property type="entry name" value="Polyketide_Synthase"/>
</dbReference>
<dbReference type="InterPro" id="IPR009081">
    <property type="entry name" value="PP-bd_ACP"/>
</dbReference>
<dbReference type="InterPro" id="IPR029063">
    <property type="entry name" value="SAM-dependent_MTases_sf"/>
</dbReference>
<dbReference type="InterPro" id="IPR016039">
    <property type="entry name" value="Thiolase-like"/>
</dbReference>
<dbReference type="PANTHER" id="PTHR45681:SF5">
    <property type="entry name" value="POLYKETIDE SYNTHASE 27-RELATED"/>
    <property type="match status" value="1"/>
</dbReference>
<dbReference type="PANTHER" id="PTHR45681">
    <property type="entry name" value="POLYKETIDE SYNTHASE 44-RELATED"/>
    <property type="match status" value="1"/>
</dbReference>
<dbReference type="Pfam" id="PF23297">
    <property type="entry name" value="ACP_SdgA_C"/>
    <property type="match status" value="1"/>
</dbReference>
<dbReference type="Pfam" id="PF00698">
    <property type="entry name" value="Acyl_transf_1"/>
    <property type="match status" value="1"/>
</dbReference>
<dbReference type="Pfam" id="PF08240">
    <property type="entry name" value="ADH_N"/>
    <property type="match status" value="1"/>
</dbReference>
<dbReference type="Pfam" id="PF13602">
    <property type="entry name" value="ADH_zinc_N_2"/>
    <property type="match status" value="1"/>
</dbReference>
<dbReference type="Pfam" id="PF00109">
    <property type="entry name" value="ketoacyl-synt"/>
    <property type="match status" value="1"/>
</dbReference>
<dbReference type="Pfam" id="PF02801">
    <property type="entry name" value="Ketoacyl-synt_C"/>
    <property type="match status" value="1"/>
</dbReference>
<dbReference type="Pfam" id="PF08659">
    <property type="entry name" value="KR"/>
    <property type="match status" value="1"/>
</dbReference>
<dbReference type="Pfam" id="PF08242">
    <property type="entry name" value="Methyltransf_12"/>
    <property type="match status" value="1"/>
</dbReference>
<dbReference type="SMART" id="SM00827">
    <property type="entry name" value="PKS_AT"/>
    <property type="match status" value="1"/>
</dbReference>
<dbReference type="SMART" id="SM00829">
    <property type="entry name" value="PKS_ER"/>
    <property type="match status" value="1"/>
</dbReference>
<dbReference type="SMART" id="SM00822">
    <property type="entry name" value="PKS_KR"/>
    <property type="match status" value="1"/>
</dbReference>
<dbReference type="SMART" id="SM00825">
    <property type="entry name" value="PKS_KS"/>
    <property type="match status" value="1"/>
</dbReference>
<dbReference type="SUPFAM" id="SSF47336">
    <property type="entry name" value="ACP-like"/>
    <property type="match status" value="1"/>
</dbReference>
<dbReference type="SUPFAM" id="SSF52151">
    <property type="entry name" value="FabD/lysophospholipase-like"/>
    <property type="match status" value="1"/>
</dbReference>
<dbReference type="SUPFAM" id="SSF50129">
    <property type="entry name" value="GroES-like"/>
    <property type="match status" value="1"/>
</dbReference>
<dbReference type="SUPFAM" id="SSF51735">
    <property type="entry name" value="NAD(P)-binding Rossmann-fold domains"/>
    <property type="match status" value="2"/>
</dbReference>
<dbReference type="SUPFAM" id="SSF55048">
    <property type="entry name" value="Probable ACP-binding domain of malonyl-CoA ACP transacylase"/>
    <property type="match status" value="1"/>
</dbReference>
<dbReference type="SUPFAM" id="SSF53335">
    <property type="entry name" value="S-adenosyl-L-methionine-dependent methyltransferases"/>
    <property type="match status" value="1"/>
</dbReference>
<dbReference type="SUPFAM" id="SSF53901">
    <property type="entry name" value="Thiolase-like"/>
    <property type="match status" value="1"/>
</dbReference>
<dbReference type="PROSITE" id="PS50075">
    <property type="entry name" value="CARRIER"/>
    <property type="match status" value="1"/>
</dbReference>
<dbReference type="PROSITE" id="PS00606">
    <property type="entry name" value="KS3_1"/>
    <property type="match status" value="1"/>
</dbReference>
<dbReference type="PROSITE" id="PS52004">
    <property type="entry name" value="KS3_2"/>
    <property type="match status" value="1"/>
</dbReference>
<dbReference type="PROSITE" id="PS52019">
    <property type="entry name" value="PKS_MFAS_DH"/>
    <property type="match status" value="1"/>
</dbReference>
<protein>
    <recommendedName>
        <fullName>Probable polyketide synthase 28</fullName>
        <shortName>dipks28</shortName>
        <ecNumber>2.3.1.-</ecNumber>
    </recommendedName>
</protein>
<evidence type="ECO:0000250" key="1"/>
<evidence type="ECO:0000255" key="2"/>
<evidence type="ECO:0000255" key="3">
    <source>
        <dbReference type="PROSITE-ProRule" id="PRU00258"/>
    </source>
</evidence>
<evidence type="ECO:0000255" key="4">
    <source>
        <dbReference type="PROSITE-ProRule" id="PRU01348"/>
    </source>
</evidence>
<evidence type="ECO:0000255" key="5">
    <source>
        <dbReference type="PROSITE-ProRule" id="PRU01363"/>
    </source>
</evidence>
<evidence type="ECO:0000255" key="6">
    <source>
        <dbReference type="PROSITE-ProRule" id="PRU10022"/>
    </source>
</evidence>
<evidence type="ECO:0000256" key="7">
    <source>
        <dbReference type="SAM" id="MobiDB-lite"/>
    </source>
</evidence>
<proteinExistence type="inferred from homology"/>
<name>PKS28_DICDI</name>
<feature type="chain" id="PRO_0000369419" description="Probable polyketide synthase 28">
    <location>
        <begin position="1"/>
        <end position="2690"/>
    </location>
</feature>
<feature type="domain" description="Ketosynthase family 3 (KS3)" evidence="4">
    <location>
        <begin position="15"/>
        <end position="443"/>
    </location>
</feature>
<feature type="domain" description="PKS/mFAS DH" evidence="5">
    <location>
        <begin position="973"/>
        <end position="1285"/>
    </location>
</feature>
<feature type="domain" description="Carrier" evidence="3">
    <location>
        <begin position="2594"/>
        <end position="2671"/>
    </location>
</feature>
<feature type="region of interest" description="Acyl/malonyl transferases">
    <location>
        <begin position="651"/>
        <end position="684"/>
    </location>
</feature>
<feature type="region of interest" description="Disordered" evidence="7">
    <location>
        <begin position="916"/>
        <end position="946"/>
    </location>
</feature>
<feature type="region of interest" description="N-terminal hotdog fold" evidence="5">
    <location>
        <begin position="973"/>
        <end position="1102"/>
    </location>
</feature>
<feature type="region of interest" description="C-terminal hotdog fold" evidence="5">
    <location>
        <begin position="1119"/>
        <end position="1285"/>
    </location>
</feature>
<feature type="region of interest" description="Disordered" evidence="7">
    <location>
        <begin position="1401"/>
        <end position="1429"/>
    </location>
</feature>
<feature type="coiled-coil region" evidence="2">
    <location>
        <begin position="906"/>
        <end position="934"/>
    </location>
</feature>
<feature type="compositionally biased region" description="Low complexity" evidence="7">
    <location>
        <begin position="1412"/>
        <end position="1429"/>
    </location>
</feature>
<feature type="active site" description="For beta-ketoacyl synthase activity" evidence="4">
    <location>
        <position position="187"/>
    </location>
</feature>
<feature type="active site" description="For beta-ketoacyl synthase activity" evidence="4">
    <location>
        <position position="326"/>
    </location>
</feature>
<feature type="active site" description="For beta-ketoacyl synthase activity" evidence="4">
    <location>
        <position position="366"/>
    </location>
</feature>
<feature type="active site" description="For acyl/malonyl transferase activity" evidence="6">
    <location>
        <position position="661"/>
    </location>
</feature>
<feature type="active site" description="Proton acceptor; for dehydratase activity" evidence="5">
    <location>
        <position position="1014"/>
    </location>
</feature>
<feature type="active site" description="Proton donor; for dehydratase activity" evidence="5">
    <location>
        <position position="1188"/>
    </location>
</feature>
<feature type="modified residue" description="O-(pantetheine 4'-phosphoryl)serine" evidence="3">
    <location>
        <position position="2631"/>
    </location>
</feature>
<reference key="1">
    <citation type="journal article" date="2005" name="Nature">
        <title>The genome of the social amoeba Dictyostelium discoideum.</title>
        <authorList>
            <person name="Eichinger L."/>
            <person name="Pachebat J.A."/>
            <person name="Gloeckner G."/>
            <person name="Rajandream M.A."/>
            <person name="Sucgang R."/>
            <person name="Berriman M."/>
            <person name="Song J."/>
            <person name="Olsen R."/>
            <person name="Szafranski K."/>
            <person name="Xu Q."/>
            <person name="Tunggal B."/>
            <person name="Kummerfeld S."/>
            <person name="Madera M."/>
            <person name="Konfortov B.A."/>
            <person name="Rivero F."/>
            <person name="Bankier A.T."/>
            <person name="Lehmann R."/>
            <person name="Hamlin N."/>
            <person name="Davies R."/>
            <person name="Gaudet P."/>
            <person name="Fey P."/>
            <person name="Pilcher K."/>
            <person name="Chen G."/>
            <person name="Saunders D."/>
            <person name="Sodergren E.J."/>
            <person name="Davis P."/>
            <person name="Kerhornou A."/>
            <person name="Nie X."/>
            <person name="Hall N."/>
            <person name="Anjard C."/>
            <person name="Hemphill L."/>
            <person name="Bason N."/>
            <person name="Farbrother P."/>
            <person name="Desany B."/>
            <person name="Just E."/>
            <person name="Morio T."/>
            <person name="Rost R."/>
            <person name="Churcher C.M."/>
            <person name="Cooper J."/>
            <person name="Haydock S."/>
            <person name="van Driessche N."/>
            <person name="Cronin A."/>
            <person name="Goodhead I."/>
            <person name="Muzny D.M."/>
            <person name="Mourier T."/>
            <person name="Pain A."/>
            <person name="Lu M."/>
            <person name="Harper D."/>
            <person name="Lindsay R."/>
            <person name="Hauser H."/>
            <person name="James K.D."/>
            <person name="Quiles M."/>
            <person name="Madan Babu M."/>
            <person name="Saito T."/>
            <person name="Buchrieser C."/>
            <person name="Wardroper A."/>
            <person name="Felder M."/>
            <person name="Thangavelu M."/>
            <person name="Johnson D."/>
            <person name="Knights A."/>
            <person name="Loulseged H."/>
            <person name="Mungall K.L."/>
            <person name="Oliver K."/>
            <person name="Price C."/>
            <person name="Quail M.A."/>
            <person name="Urushihara H."/>
            <person name="Hernandez J."/>
            <person name="Rabbinowitsch E."/>
            <person name="Steffen D."/>
            <person name="Sanders M."/>
            <person name="Ma J."/>
            <person name="Kohara Y."/>
            <person name="Sharp S."/>
            <person name="Simmonds M.N."/>
            <person name="Spiegler S."/>
            <person name="Tivey A."/>
            <person name="Sugano S."/>
            <person name="White B."/>
            <person name="Walker D."/>
            <person name="Woodward J.R."/>
            <person name="Winckler T."/>
            <person name="Tanaka Y."/>
            <person name="Shaulsky G."/>
            <person name="Schleicher M."/>
            <person name="Weinstock G.M."/>
            <person name="Rosenthal A."/>
            <person name="Cox E.C."/>
            <person name="Chisholm R.L."/>
            <person name="Gibbs R.A."/>
            <person name="Loomis W.F."/>
            <person name="Platzer M."/>
            <person name="Kay R.R."/>
            <person name="Williams J.G."/>
            <person name="Dear P.H."/>
            <person name="Noegel A.A."/>
            <person name="Barrell B.G."/>
            <person name="Kuspa A."/>
        </authorList>
    </citation>
    <scope>NUCLEOTIDE SEQUENCE [LARGE SCALE GENOMIC DNA]</scope>
    <source>
        <strain>AX4</strain>
    </source>
</reference>
<reference key="2">
    <citation type="journal article" date="2007" name="Bioinformatics">
        <title>Polyketide synthase genes and the natural products potential of Dictyostelium discoideum.</title>
        <authorList>
            <person name="Zucko J."/>
            <person name="Skunca N."/>
            <person name="Curk T."/>
            <person name="Zupan B."/>
            <person name="Long P.F."/>
            <person name="Cullum J."/>
            <person name="Kessin R.H."/>
            <person name="Hranueli D."/>
        </authorList>
    </citation>
    <scope>IDENTIFICATION</scope>
</reference>
<gene>
    <name type="primary">pks28</name>
    <name type="ORF">DDB_G0290469</name>
</gene>
<organism>
    <name type="scientific">Dictyostelium discoideum</name>
    <name type="common">Social amoeba</name>
    <dbReference type="NCBI Taxonomy" id="44689"/>
    <lineage>
        <taxon>Eukaryota</taxon>
        <taxon>Amoebozoa</taxon>
        <taxon>Evosea</taxon>
        <taxon>Eumycetozoa</taxon>
        <taxon>Dictyostelia</taxon>
        <taxon>Dictyosteliales</taxon>
        <taxon>Dictyosteliaceae</taxon>
        <taxon>Dictyostelium</taxon>
    </lineage>
</organism>
<keyword id="KW-0175">Coiled coil</keyword>
<keyword id="KW-0596">Phosphopantetheine</keyword>
<keyword id="KW-0597">Phosphoprotein</keyword>
<keyword id="KW-1185">Reference proteome</keyword>
<keyword id="KW-0808">Transferase</keyword>
<comment type="function">
    <text evidence="1">Probable polyketide synthase.</text>
</comment>
<comment type="cofactor">
    <cofactor evidence="1">
        <name>pantetheine 4'-phosphate</name>
        <dbReference type="ChEBI" id="CHEBI:47942"/>
    </cofactor>
    <text evidence="1">Binds 1 phosphopantetheine covalently.</text>
</comment>
<comment type="domain">
    <text evidence="1">Modular protein that is responsible for the completion of one condensation-processing cycle. The beta-ketoacyl synthase region is responsible for the actual condensation reaction while the acyl/malonyl transferase region is responsible for incorporating carboxylic acids units onto an acyl carrier protein (ACP) domain (By similarity).</text>
</comment>
<comment type="miscellaneous">
    <text>Encoded by one of the numerous copies of polyketide synthase genes and clustered as a pair pks27/pks28 in chromosome 5.</text>
</comment>